<comment type="function">
    <text evidence="1">Might take part in the signal recognition particle (SRP) pathway. This is inferred from the conservation of its genetic proximity to ftsY/ffh. May be a regulatory protein.</text>
</comment>
<comment type="similarity">
    <text evidence="1">Belongs to the UPF0122 family.</text>
</comment>
<gene>
    <name type="ordered locus">Lm4b_01818</name>
</gene>
<dbReference type="EMBL" id="FM242711">
    <property type="protein sequence ID" value="CAS05576.1"/>
    <property type="molecule type" value="Genomic_DNA"/>
</dbReference>
<dbReference type="RefSeq" id="WP_003728307.1">
    <property type="nucleotide sequence ID" value="NC_012488.1"/>
</dbReference>
<dbReference type="SMR" id="C1KWA1"/>
<dbReference type="KEGG" id="lmc:Lm4b_01818"/>
<dbReference type="HOGENOM" id="CLU_129218_1_0_9"/>
<dbReference type="Gene3D" id="1.10.10.10">
    <property type="entry name" value="Winged helix-like DNA-binding domain superfamily/Winged helix DNA-binding domain"/>
    <property type="match status" value="1"/>
</dbReference>
<dbReference type="HAMAP" id="MF_00245">
    <property type="entry name" value="UPF0122"/>
    <property type="match status" value="1"/>
</dbReference>
<dbReference type="InterPro" id="IPR013324">
    <property type="entry name" value="RNA_pol_sigma_r3/r4-like"/>
</dbReference>
<dbReference type="InterPro" id="IPR007394">
    <property type="entry name" value="UPF0122"/>
</dbReference>
<dbReference type="InterPro" id="IPR054831">
    <property type="entry name" value="UPF0122_fam_protein"/>
</dbReference>
<dbReference type="InterPro" id="IPR036388">
    <property type="entry name" value="WH-like_DNA-bd_sf"/>
</dbReference>
<dbReference type="NCBIfam" id="NF001068">
    <property type="entry name" value="PRK00118.1-4"/>
    <property type="match status" value="1"/>
</dbReference>
<dbReference type="NCBIfam" id="NF001069">
    <property type="entry name" value="PRK00118.1-5"/>
    <property type="match status" value="1"/>
</dbReference>
<dbReference type="NCBIfam" id="NF001070">
    <property type="entry name" value="PRK00118.1-6"/>
    <property type="match status" value="1"/>
</dbReference>
<dbReference type="NCBIfam" id="NF045758">
    <property type="entry name" value="YlxM"/>
    <property type="match status" value="1"/>
</dbReference>
<dbReference type="PANTHER" id="PTHR40083">
    <property type="entry name" value="UPF0122 PROTEIN CBO2450/CLC_2298"/>
    <property type="match status" value="1"/>
</dbReference>
<dbReference type="PANTHER" id="PTHR40083:SF1">
    <property type="entry name" value="UPF0122 PROTEIN YLXM"/>
    <property type="match status" value="1"/>
</dbReference>
<dbReference type="Pfam" id="PF04297">
    <property type="entry name" value="UPF0122"/>
    <property type="match status" value="1"/>
</dbReference>
<dbReference type="SUPFAM" id="SSF88659">
    <property type="entry name" value="Sigma3 and sigma4 domains of RNA polymerase sigma factors"/>
    <property type="match status" value="1"/>
</dbReference>
<sequence>MFEKTNRMNLLFDFYQELLTTKQKAYVSFYYLDDYSLGEIAEEFEVSRQAIYDNIKRTEESLEKYEEKLGMLKKYQQREKLFSQLEAQLTKKNFLDEQVKDTLEQLKNID</sequence>
<protein>
    <recommendedName>
        <fullName evidence="1">UPF0122 protein Lm4b_01818</fullName>
    </recommendedName>
</protein>
<name>Y1818_LISMC</name>
<evidence type="ECO:0000255" key="1">
    <source>
        <dbReference type="HAMAP-Rule" id="MF_00245"/>
    </source>
</evidence>
<feature type="chain" id="PRO_1000204493" description="UPF0122 protein Lm4b_01818">
    <location>
        <begin position="1"/>
        <end position="110"/>
    </location>
</feature>
<organism>
    <name type="scientific">Listeria monocytogenes serotype 4b (strain CLIP80459)</name>
    <dbReference type="NCBI Taxonomy" id="568819"/>
    <lineage>
        <taxon>Bacteria</taxon>
        <taxon>Bacillati</taxon>
        <taxon>Bacillota</taxon>
        <taxon>Bacilli</taxon>
        <taxon>Bacillales</taxon>
        <taxon>Listeriaceae</taxon>
        <taxon>Listeria</taxon>
    </lineage>
</organism>
<accession>C1KWA1</accession>
<proteinExistence type="inferred from homology"/>
<reference key="1">
    <citation type="journal article" date="2012" name="BMC Genomics">
        <title>Comparative genomics and transcriptomics of lineages I, II, and III strains of Listeria monocytogenes.</title>
        <authorList>
            <person name="Hain T."/>
            <person name="Ghai R."/>
            <person name="Billion A."/>
            <person name="Kuenne C.T."/>
            <person name="Steinweg C."/>
            <person name="Izar B."/>
            <person name="Mohamed W."/>
            <person name="Mraheil M."/>
            <person name="Domann E."/>
            <person name="Schaffrath S."/>
            <person name="Karst U."/>
            <person name="Goesmann A."/>
            <person name="Oehm S."/>
            <person name="Puhler A."/>
            <person name="Merkl R."/>
            <person name="Vorwerk S."/>
            <person name="Glaser P."/>
            <person name="Garrido P."/>
            <person name="Rusniok C."/>
            <person name="Buchrieser C."/>
            <person name="Goebel W."/>
            <person name="Chakraborty T."/>
        </authorList>
    </citation>
    <scope>NUCLEOTIDE SEQUENCE [LARGE SCALE GENOMIC DNA]</scope>
    <source>
        <strain>CLIP80459</strain>
    </source>
</reference>